<dbReference type="EMBL" id="CP000970">
    <property type="protein sequence ID" value="ACB17169.1"/>
    <property type="molecule type" value="Genomic_DNA"/>
</dbReference>
<dbReference type="RefSeq" id="WP_000429386.1">
    <property type="nucleotide sequence ID" value="NC_010498.1"/>
</dbReference>
<dbReference type="SMR" id="B1LL64"/>
<dbReference type="GeneID" id="98390858"/>
<dbReference type="KEGG" id="ecm:EcSMS35_4105"/>
<dbReference type="HOGENOM" id="CLU_148047_1_0_6"/>
<dbReference type="Proteomes" id="UP000007011">
    <property type="component" value="Chromosome"/>
</dbReference>
<dbReference type="GO" id="GO:0005886">
    <property type="term" value="C:plasma membrane"/>
    <property type="evidence" value="ECO:0007669"/>
    <property type="project" value="UniProtKB-SubCell"/>
</dbReference>
<dbReference type="GO" id="GO:0045259">
    <property type="term" value="C:proton-transporting ATP synthase complex"/>
    <property type="evidence" value="ECO:0007669"/>
    <property type="project" value="UniProtKB-KW"/>
</dbReference>
<dbReference type="GO" id="GO:0033177">
    <property type="term" value="C:proton-transporting two-sector ATPase complex, proton-transporting domain"/>
    <property type="evidence" value="ECO:0007669"/>
    <property type="project" value="InterPro"/>
</dbReference>
<dbReference type="GO" id="GO:0008289">
    <property type="term" value="F:lipid binding"/>
    <property type="evidence" value="ECO:0007669"/>
    <property type="project" value="UniProtKB-KW"/>
</dbReference>
<dbReference type="GO" id="GO:0046933">
    <property type="term" value="F:proton-transporting ATP synthase activity, rotational mechanism"/>
    <property type="evidence" value="ECO:0007669"/>
    <property type="project" value="UniProtKB-UniRule"/>
</dbReference>
<dbReference type="CDD" id="cd18185">
    <property type="entry name" value="ATP-synt_Fo_c_ATPE"/>
    <property type="match status" value="1"/>
</dbReference>
<dbReference type="FunFam" id="1.20.20.10:FF:000002">
    <property type="entry name" value="ATP synthase subunit c"/>
    <property type="match status" value="1"/>
</dbReference>
<dbReference type="Gene3D" id="1.20.20.10">
    <property type="entry name" value="F1F0 ATP synthase subunit C"/>
    <property type="match status" value="1"/>
</dbReference>
<dbReference type="HAMAP" id="MF_01396">
    <property type="entry name" value="ATP_synth_c_bact"/>
    <property type="match status" value="1"/>
</dbReference>
<dbReference type="InterPro" id="IPR005953">
    <property type="entry name" value="ATP_synth_csu_bac/chlpt"/>
</dbReference>
<dbReference type="InterPro" id="IPR000454">
    <property type="entry name" value="ATP_synth_F0_csu"/>
</dbReference>
<dbReference type="InterPro" id="IPR020537">
    <property type="entry name" value="ATP_synth_F0_csu_DDCD_BS"/>
</dbReference>
<dbReference type="InterPro" id="IPR038662">
    <property type="entry name" value="ATP_synth_F0_csu_sf"/>
</dbReference>
<dbReference type="InterPro" id="IPR002379">
    <property type="entry name" value="ATPase_proteolipid_c-like_dom"/>
</dbReference>
<dbReference type="InterPro" id="IPR035921">
    <property type="entry name" value="F/V-ATP_Csub_sf"/>
</dbReference>
<dbReference type="NCBIfam" id="TIGR01260">
    <property type="entry name" value="ATP_synt_c"/>
    <property type="match status" value="1"/>
</dbReference>
<dbReference type="NCBIfam" id="NF005363">
    <property type="entry name" value="PRK06876.1"/>
    <property type="match status" value="1"/>
</dbReference>
<dbReference type="Pfam" id="PF00137">
    <property type="entry name" value="ATP-synt_C"/>
    <property type="match status" value="1"/>
</dbReference>
<dbReference type="PRINTS" id="PR00124">
    <property type="entry name" value="ATPASEC"/>
</dbReference>
<dbReference type="SUPFAM" id="SSF81333">
    <property type="entry name" value="F1F0 ATP synthase subunit C"/>
    <property type="match status" value="1"/>
</dbReference>
<dbReference type="PROSITE" id="PS00605">
    <property type="entry name" value="ATPASE_C"/>
    <property type="match status" value="1"/>
</dbReference>
<gene>
    <name evidence="1" type="primary">atpE</name>
    <name type="ordered locus">EcSMS35_4105</name>
</gene>
<organism>
    <name type="scientific">Escherichia coli (strain SMS-3-5 / SECEC)</name>
    <dbReference type="NCBI Taxonomy" id="439855"/>
    <lineage>
        <taxon>Bacteria</taxon>
        <taxon>Pseudomonadati</taxon>
        <taxon>Pseudomonadota</taxon>
        <taxon>Gammaproteobacteria</taxon>
        <taxon>Enterobacterales</taxon>
        <taxon>Enterobacteriaceae</taxon>
        <taxon>Escherichia</taxon>
    </lineage>
</organism>
<accession>B1LL64</accession>
<evidence type="ECO:0000255" key="1">
    <source>
        <dbReference type="HAMAP-Rule" id="MF_01396"/>
    </source>
</evidence>
<comment type="function">
    <text evidence="1">F(1)F(0) ATP synthase produces ATP from ADP in the presence of a proton or sodium gradient. F-type ATPases consist of two structural domains, F(1) containing the extramembraneous catalytic core and F(0) containing the membrane proton channel, linked together by a central stalk and a peripheral stalk. During catalysis, ATP synthesis in the catalytic domain of F(1) is coupled via a rotary mechanism of the central stalk subunits to proton translocation.</text>
</comment>
<comment type="function">
    <text evidence="1">Key component of the F(0) channel; it plays a direct role in translocation across the membrane. A homomeric c-ring of between 10-14 subunits forms the central stalk rotor element with the F(1) delta and epsilon subunits.</text>
</comment>
<comment type="subunit">
    <text evidence="1">F-type ATPases have 2 components, F(1) - the catalytic core - and F(0) - the membrane proton channel. F(1) has five subunits: alpha(3), beta(3), gamma(1), delta(1), epsilon(1). F(0) has three main subunits: a(1), b(2) and c(10-14). The alpha and beta chains form an alternating ring which encloses part of the gamma chain. F(1) is attached to F(0) by a central stalk formed by the gamma and epsilon chains, while a peripheral stalk is formed by the delta and b chains.</text>
</comment>
<comment type="subcellular location">
    <subcellularLocation>
        <location evidence="1">Cell inner membrane</location>
        <topology evidence="1">Multi-pass membrane protein</topology>
    </subcellularLocation>
</comment>
<comment type="similarity">
    <text evidence="1">Belongs to the ATPase C chain family.</text>
</comment>
<protein>
    <recommendedName>
        <fullName evidence="1">ATP synthase subunit c</fullName>
    </recommendedName>
    <alternativeName>
        <fullName evidence="1">ATP synthase F(0) sector subunit c</fullName>
    </alternativeName>
    <alternativeName>
        <fullName evidence="1">F-type ATPase subunit c</fullName>
        <shortName evidence="1">F-ATPase subunit c</shortName>
    </alternativeName>
    <alternativeName>
        <fullName evidence="1">Lipid-binding protein</fullName>
    </alternativeName>
</protein>
<feature type="chain" id="PRO_1000184374" description="ATP synthase subunit c">
    <location>
        <begin position="1"/>
        <end position="79"/>
    </location>
</feature>
<feature type="transmembrane region" description="Helical" evidence="1">
    <location>
        <begin position="11"/>
        <end position="31"/>
    </location>
</feature>
<feature type="transmembrane region" description="Helical" evidence="1">
    <location>
        <begin position="53"/>
        <end position="73"/>
    </location>
</feature>
<feature type="site" description="Reversibly protonated during proton transport" evidence="1">
    <location>
        <position position="61"/>
    </location>
</feature>
<sequence>MENLNMDLLYMAAAVMMGLAAIGAAIGIGILGGKFLEGAARQPDLIPLLRTQFFIVMGLVDAIPMIAVGLGLYVMFAVA</sequence>
<name>ATPL_ECOSM</name>
<proteinExistence type="inferred from homology"/>
<keyword id="KW-0066">ATP synthesis</keyword>
<keyword id="KW-0997">Cell inner membrane</keyword>
<keyword id="KW-1003">Cell membrane</keyword>
<keyword id="KW-0138">CF(0)</keyword>
<keyword id="KW-0375">Hydrogen ion transport</keyword>
<keyword id="KW-0406">Ion transport</keyword>
<keyword id="KW-0446">Lipid-binding</keyword>
<keyword id="KW-0472">Membrane</keyword>
<keyword id="KW-0812">Transmembrane</keyword>
<keyword id="KW-1133">Transmembrane helix</keyword>
<keyword id="KW-0813">Transport</keyword>
<reference key="1">
    <citation type="journal article" date="2008" name="J. Bacteriol.">
        <title>Insights into the environmental resistance gene pool from the genome sequence of the multidrug-resistant environmental isolate Escherichia coli SMS-3-5.</title>
        <authorList>
            <person name="Fricke W.F."/>
            <person name="Wright M.S."/>
            <person name="Lindell A.H."/>
            <person name="Harkins D.M."/>
            <person name="Baker-Austin C."/>
            <person name="Ravel J."/>
            <person name="Stepanauskas R."/>
        </authorList>
    </citation>
    <scope>NUCLEOTIDE SEQUENCE [LARGE SCALE GENOMIC DNA]</scope>
    <source>
        <strain>SMS-3-5 / SECEC</strain>
    </source>
</reference>